<accession>F4I6V0</accession>
<accession>Q9S7C7</accession>
<dbReference type="EC" id="2.4.2.-" evidence="4"/>
<dbReference type="EMBL" id="KJ138944">
    <property type="protein sequence ID" value="AHL38884.1"/>
    <property type="molecule type" value="mRNA"/>
</dbReference>
<dbReference type="EMBL" id="AC010796">
    <property type="protein sequence ID" value="AAG52475.1"/>
    <property type="status" value="ALT_SEQ"/>
    <property type="molecule type" value="Genomic_DNA"/>
</dbReference>
<dbReference type="EMBL" id="AC011663">
    <property type="protein sequence ID" value="AAG52325.1"/>
    <property type="status" value="ALT_SEQ"/>
    <property type="molecule type" value="Genomic_DNA"/>
</dbReference>
<dbReference type="EMBL" id="CP002684">
    <property type="protein sequence ID" value="AEE35092.1"/>
    <property type="molecule type" value="Genomic_DNA"/>
</dbReference>
<dbReference type="EMBL" id="CP002684">
    <property type="protein sequence ID" value="ANM59749.1"/>
    <property type="molecule type" value="Genomic_DNA"/>
</dbReference>
<dbReference type="PIR" id="E96730">
    <property type="entry name" value="E96730"/>
</dbReference>
<dbReference type="RefSeq" id="NP_001322086.1">
    <property type="nucleotide sequence ID" value="NM_001334470.1"/>
</dbReference>
<dbReference type="RefSeq" id="NP_177220.2">
    <property type="nucleotide sequence ID" value="NM_105731.4"/>
</dbReference>
<dbReference type="FunCoup" id="F4I6V0">
    <property type="interactions" value="199"/>
</dbReference>
<dbReference type="STRING" id="3702.F4I6V0"/>
<dbReference type="CAZy" id="GT77">
    <property type="family name" value="Glycosyltransferase Family 77"/>
</dbReference>
<dbReference type="iPTMnet" id="F4I6V0"/>
<dbReference type="PaxDb" id="3702-AT1G70630.1"/>
<dbReference type="ProteomicsDB" id="236488"/>
<dbReference type="EnsemblPlants" id="AT1G70630.1">
    <property type="protein sequence ID" value="AT1G70630.1"/>
    <property type="gene ID" value="AT1G70630"/>
</dbReference>
<dbReference type="EnsemblPlants" id="AT1G70630.2">
    <property type="protein sequence ID" value="AT1G70630.2"/>
    <property type="gene ID" value="AT1G70630"/>
</dbReference>
<dbReference type="GeneID" id="843400"/>
<dbReference type="Gramene" id="AT1G70630.1">
    <property type="protein sequence ID" value="AT1G70630.1"/>
    <property type="gene ID" value="AT1G70630"/>
</dbReference>
<dbReference type="Gramene" id="AT1G70630.2">
    <property type="protein sequence ID" value="AT1G70630.2"/>
    <property type="gene ID" value="AT1G70630"/>
</dbReference>
<dbReference type="KEGG" id="ath:AT1G70630"/>
<dbReference type="Araport" id="AT1G70630"/>
<dbReference type="TAIR" id="AT1G70630">
    <property type="gene designation" value="RAY1"/>
</dbReference>
<dbReference type="eggNOG" id="ENOG502QRDX">
    <property type="taxonomic scope" value="Eukaryota"/>
</dbReference>
<dbReference type="HOGENOM" id="CLU_020968_1_0_1"/>
<dbReference type="InParanoid" id="F4I6V0"/>
<dbReference type="PRO" id="PR:F4I6V0"/>
<dbReference type="Proteomes" id="UP000006548">
    <property type="component" value="Chromosome 1"/>
</dbReference>
<dbReference type="ExpressionAtlas" id="F4I6V0">
    <property type="expression patterns" value="baseline and differential"/>
</dbReference>
<dbReference type="GO" id="GO:0005794">
    <property type="term" value="C:Golgi apparatus"/>
    <property type="evidence" value="ECO:0000314"/>
    <property type="project" value="TAIR"/>
</dbReference>
<dbReference type="GO" id="GO:0016757">
    <property type="term" value="F:glycosyltransferase activity"/>
    <property type="evidence" value="ECO:0000314"/>
    <property type="project" value="TAIR"/>
</dbReference>
<dbReference type="GO" id="GO:0042546">
    <property type="term" value="P:cell wall biogenesis"/>
    <property type="evidence" value="ECO:0000315"/>
    <property type="project" value="TAIR"/>
</dbReference>
<dbReference type="GO" id="GO:0071555">
    <property type="term" value="P:cell wall organization"/>
    <property type="evidence" value="ECO:0007669"/>
    <property type="project" value="UniProtKB-KW"/>
</dbReference>
<dbReference type="InterPro" id="IPR005069">
    <property type="entry name" value="Nucl-diP-sugar_transferase"/>
</dbReference>
<dbReference type="InterPro" id="IPR044575">
    <property type="entry name" value="RAY1-like"/>
</dbReference>
<dbReference type="PANTHER" id="PTHR47483">
    <property type="entry name" value="BETA-ARABINOFURANOSYLTRANSFERASE RAY1"/>
    <property type="match status" value="1"/>
</dbReference>
<dbReference type="PANTHER" id="PTHR47483:SF1">
    <property type="entry name" value="BETA-ARABINOFURANOSYLTRANSFERASE RAY1"/>
    <property type="match status" value="1"/>
</dbReference>
<dbReference type="Pfam" id="PF03407">
    <property type="entry name" value="Nucleotid_trans"/>
    <property type="match status" value="1"/>
</dbReference>
<keyword id="KW-0961">Cell wall biogenesis/degradation</keyword>
<keyword id="KW-0328">Glycosyltransferase</keyword>
<keyword id="KW-1185">Reference proteome</keyword>
<keyword id="KW-0808">Transferase</keyword>
<name>RAY1_ARATH</name>
<feature type="chain" id="PRO_0000434536" description="Beta-arabinofuranosyltransferase RAY1">
    <location>
        <begin position="1"/>
        <end position="537"/>
    </location>
</feature>
<feature type="short sequence motif" description="DXD motif" evidence="4">
    <location>
        <begin position="370"/>
        <end position="372"/>
    </location>
</feature>
<gene>
    <name evidence="3" type="primary">RAY1</name>
    <name evidence="5" type="ordered locus">At1g70630</name>
    <name evidence="7" type="ORF">F24J13.20</name>
    <name evidence="6" type="ORF">F5A18.19</name>
</gene>
<proteinExistence type="evidence at transcript level"/>
<evidence type="ECO:0000250" key="1">
    <source>
        <dbReference type="UniProtKB" id="Q9JI93"/>
    </source>
</evidence>
<evidence type="ECO:0000269" key="2">
    <source>
    </source>
</evidence>
<evidence type="ECO:0000303" key="3">
    <source>
    </source>
</evidence>
<evidence type="ECO:0000305" key="4"/>
<evidence type="ECO:0000312" key="5">
    <source>
        <dbReference type="Araport" id="AT1G70630"/>
    </source>
</evidence>
<evidence type="ECO:0000312" key="6">
    <source>
        <dbReference type="EMBL" id="AAG52325.1"/>
    </source>
</evidence>
<evidence type="ECO:0000312" key="7">
    <source>
        <dbReference type="EMBL" id="AAG52475.1"/>
    </source>
</evidence>
<reference key="1">
    <citation type="journal article" date="2014" name="Plant J.">
        <title>The plant glycosyltransferase clone collection for functional genomics.</title>
        <authorList>
            <person name="Lao J."/>
            <person name="Oikawa A."/>
            <person name="Bromley J.R."/>
            <person name="McInerney P."/>
            <person name="Suttangkakul A."/>
            <person name="Smith-Moritz A.M."/>
            <person name="Plahar H."/>
            <person name="Chiu T.-Y."/>
            <person name="Gonzalez Fernandez-Nino S.M.G."/>
            <person name="Ebert B."/>
            <person name="Yang F."/>
            <person name="Christiansen K.M."/>
            <person name="Hansen S.F."/>
            <person name="Stonebloom S."/>
            <person name="Adams P.D."/>
            <person name="Ronald P.C."/>
            <person name="Hillson N.J."/>
            <person name="Hadi M.Z."/>
            <person name="Vega-Sanchez M.E."/>
            <person name="Loque D."/>
            <person name="Scheller H.V."/>
            <person name="Heazlewood J.L."/>
        </authorList>
    </citation>
    <scope>NUCLEOTIDE SEQUENCE [MRNA]</scope>
    <source>
        <strain>cv. Columbia</strain>
    </source>
</reference>
<reference key="2">
    <citation type="journal article" date="2000" name="Nature">
        <title>Sequence and analysis of chromosome 1 of the plant Arabidopsis thaliana.</title>
        <authorList>
            <person name="Theologis A."/>
            <person name="Ecker J.R."/>
            <person name="Palm C.J."/>
            <person name="Federspiel N.A."/>
            <person name="Kaul S."/>
            <person name="White O."/>
            <person name="Alonso J."/>
            <person name="Altafi H."/>
            <person name="Araujo R."/>
            <person name="Bowman C.L."/>
            <person name="Brooks S.Y."/>
            <person name="Buehler E."/>
            <person name="Chan A."/>
            <person name="Chao Q."/>
            <person name="Chen H."/>
            <person name="Cheuk R.F."/>
            <person name="Chin C.W."/>
            <person name="Chung M.K."/>
            <person name="Conn L."/>
            <person name="Conway A.B."/>
            <person name="Conway A.R."/>
            <person name="Creasy T.H."/>
            <person name="Dewar K."/>
            <person name="Dunn P."/>
            <person name="Etgu P."/>
            <person name="Feldblyum T.V."/>
            <person name="Feng J.-D."/>
            <person name="Fong B."/>
            <person name="Fujii C.Y."/>
            <person name="Gill J.E."/>
            <person name="Goldsmith A.D."/>
            <person name="Haas B."/>
            <person name="Hansen N.F."/>
            <person name="Hughes B."/>
            <person name="Huizar L."/>
            <person name="Hunter J.L."/>
            <person name="Jenkins J."/>
            <person name="Johnson-Hopson C."/>
            <person name="Khan S."/>
            <person name="Khaykin E."/>
            <person name="Kim C.J."/>
            <person name="Koo H.L."/>
            <person name="Kremenetskaia I."/>
            <person name="Kurtz D.B."/>
            <person name="Kwan A."/>
            <person name="Lam B."/>
            <person name="Langin-Hooper S."/>
            <person name="Lee A."/>
            <person name="Lee J.M."/>
            <person name="Lenz C.A."/>
            <person name="Li J.H."/>
            <person name="Li Y.-P."/>
            <person name="Lin X."/>
            <person name="Liu S.X."/>
            <person name="Liu Z.A."/>
            <person name="Luros J.S."/>
            <person name="Maiti R."/>
            <person name="Marziali A."/>
            <person name="Militscher J."/>
            <person name="Miranda M."/>
            <person name="Nguyen M."/>
            <person name="Nierman W.C."/>
            <person name="Osborne B.I."/>
            <person name="Pai G."/>
            <person name="Peterson J."/>
            <person name="Pham P.K."/>
            <person name="Rizzo M."/>
            <person name="Rooney T."/>
            <person name="Rowley D."/>
            <person name="Sakano H."/>
            <person name="Salzberg S.L."/>
            <person name="Schwartz J.R."/>
            <person name="Shinn P."/>
            <person name="Southwick A.M."/>
            <person name="Sun H."/>
            <person name="Tallon L.J."/>
            <person name="Tambunga G."/>
            <person name="Toriumi M.J."/>
            <person name="Town C.D."/>
            <person name="Utterback T."/>
            <person name="Van Aken S."/>
            <person name="Vaysberg M."/>
            <person name="Vysotskaia V.S."/>
            <person name="Walker M."/>
            <person name="Wu D."/>
            <person name="Yu G."/>
            <person name="Fraser C.M."/>
            <person name="Venter J.C."/>
            <person name="Davis R.W."/>
        </authorList>
    </citation>
    <scope>NUCLEOTIDE SEQUENCE [LARGE SCALE GENOMIC DNA]</scope>
    <source>
        <strain>cv. Columbia</strain>
    </source>
</reference>
<reference key="3">
    <citation type="journal article" date="2017" name="Plant J.">
        <title>Araport11: a complete reannotation of the Arabidopsis thaliana reference genome.</title>
        <authorList>
            <person name="Cheng C.Y."/>
            <person name="Krishnakumar V."/>
            <person name="Chan A.P."/>
            <person name="Thibaud-Nissen F."/>
            <person name="Schobel S."/>
            <person name="Town C.D."/>
        </authorList>
    </citation>
    <scope>GENOME REANNOTATION</scope>
    <source>
        <strain>cv. Columbia</strain>
    </source>
</reference>
<reference key="4">
    <citation type="journal article" date="2013" name="Mol. Plant">
        <title>Arabinosylation of a Yariv-precipitable cell wall polymer impacts plant growth as exemplified by the Arabidopsis glycosyltransferase mutant ray1.</title>
        <authorList>
            <person name="Gille S."/>
            <person name="Sharma V."/>
            <person name="Baidoo E.E."/>
            <person name="Keasling J.D."/>
            <person name="Scheller H.V."/>
            <person name="Pauly M."/>
        </authorList>
    </citation>
    <scope>FUNCTION</scope>
    <scope>DISRUPTION PHENOTYPE</scope>
    <source>
        <strain>cv. Columbia</strain>
    </source>
</reference>
<sequence length="537" mass="61922">MMSRIEAYQSDIAVLMDPETVLLPDFISALSYAHELGRDWLLVSSSVEIPRFPFHWDETRHFWRQDNGKRVRFRELQKMISLRSLQSNSSASKMIMAWNNIDMPLHCGVLPPFLYQRGTHNQWIINEAMSCKRRFVFDATSTISSFFLGNAENIYNRSDNVSEPKTRNWEYVGNSHLGQLYGSLYSRSYTLPKLLKCNRRYIFVSASERSTDLSIPKGKSLGFRTREKISACITRTKSRSLKLDFVQKDETVPPLKFPFDLESLLPLVADKNRTVVLSVAGYSYKDMLMSWVCRLRRLKVPNFLVCALDDETYQFSILQGLPVFFDPYAPKNISFNDCHFGSKCFQRVTKVKSRTVLKILKLGYNVLLSDVDVYWFRNPLPLLQSFGPSVLAAQSDEYNTTAPINRPRRLNSGFYFARSDSPTIAAMEKVVKHAATSGLSEQPSFYDTLCGEGGAYRLGDDRCVEPETNLTVQFLDRELFPNGAYGDLWLKEDVRAECEKKHCFVLHNNWISGRLKKLERQMMKGLWEYDASMRMCV</sequence>
<organism>
    <name type="scientific">Arabidopsis thaliana</name>
    <name type="common">Mouse-ear cress</name>
    <dbReference type="NCBI Taxonomy" id="3702"/>
    <lineage>
        <taxon>Eukaryota</taxon>
        <taxon>Viridiplantae</taxon>
        <taxon>Streptophyta</taxon>
        <taxon>Embryophyta</taxon>
        <taxon>Tracheophyta</taxon>
        <taxon>Spermatophyta</taxon>
        <taxon>Magnoliopsida</taxon>
        <taxon>eudicotyledons</taxon>
        <taxon>Gunneridae</taxon>
        <taxon>Pentapetalae</taxon>
        <taxon>rosids</taxon>
        <taxon>malvids</taxon>
        <taxon>Brassicales</taxon>
        <taxon>Brassicaceae</taxon>
        <taxon>Camelineae</taxon>
        <taxon>Arabidopsis</taxon>
    </lineage>
</organism>
<comment type="function">
    <text evidence="2">Beta-arabinofuranosyltransferase that transfers specifically an arabinosyl residue from UDP-arabinofuranose to the monosaccharide galactose or beta-methyl-galactoside in vitro. Catalyzes the addition of a beta-arabinofuranose residue onto a beta-galactosyl residue of an Yariv-precipitable wall polymer in vivo.</text>
</comment>
<comment type="domain">
    <text evidence="1">The conserved DXD motif is involved in enzyme activity.</text>
</comment>
<comment type="disruption phenotype">
    <text evidence="2">Reduced growth of primary root. Delayed flowering.</text>
</comment>
<comment type="similarity">
    <text evidence="4">Belongs to the glycosyltransferase 77 family.</text>
</comment>
<comment type="sequence caution" evidence="4">
    <conflict type="erroneous gene model prediction">
        <sequence resource="EMBL-CDS" id="AAG52325"/>
    </conflict>
</comment>
<comment type="sequence caution" evidence="4">
    <conflict type="erroneous gene model prediction">
        <sequence resource="EMBL-CDS" id="AAG52475"/>
    </conflict>
</comment>
<protein>
    <recommendedName>
        <fullName evidence="4">Beta-arabinofuranosyltransferase RAY1</fullName>
        <ecNumber evidence="4">2.4.2.-</ecNumber>
    </recommendedName>
    <alternativeName>
        <fullName evidence="3">Protein REDUCED ARABINOSE YARIV 1</fullName>
    </alternativeName>
</protein>